<feature type="chain" id="PRO_0000095155" description="Adenylosuccinate synthetase">
    <location>
        <begin position="1"/>
        <end position="429"/>
    </location>
</feature>
<feature type="active site" description="Proton acceptor" evidence="1">
    <location>
        <position position="13"/>
    </location>
</feature>
<feature type="active site" description="Proton donor" evidence="1">
    <location>
        <position position="41"/>
    </location>
</feature>
<feature type="binding site" evidence="1">
    <location>
        <begin position="12"/>
        <end position="18"/>
    </location>
    <ligand>
        <name>GTP</name>
        <dbReference type="ChEBI" id="CHEBI:37565"/>
    </ligand>
</feature>
<feature type="binding site" description="in other chain" evidence="1">
    <location>
        <begin position="13"/>
        <end position="16"/>
    </location>
    <ligand>
        <name>IMP</name>
        <dbReference type="ChEBI" id="CHEBI:58053"/>
        <note>ligand shared between dimeric partners</note>
    </ligand>
</feature>
<feature type="binding site" evidence="1">
    <location>
        <position position="13"/>
    </location>
    <ligand>
        <name>Mg(2+)</name>
        <dbReference type="ChEBI" id="CHEBI:18420"/>
    </ligand>
</feature>
<feature type="binding site" description="in other chain" evidence="1">
    <location>
        <begin position="38"/>
        <end position="41"/>
    </location>
    <ligand>
        <name>IMP</name>
        <dbReference type="ChEBI" id="CHEBI:58053"/>
        <note>ligand shared between dimeric partners</note>
    </ligand>
</feature>
<feature type="binding site" evidence="1">
    <location>
        <begin position="40"/>
        <end position="42"/>
    </location>
    <ligand>
        <name>GTP</name>
        <dbReference type="ChEBI" id="CHEBI:37565"/>
    </ligand>
</feature>
<feature type="binding site" evidence="1">
    <location>
        <position position="40"/>
    </location>
    <ligand>
        <name>Mg(2+)</name>
        <dbReference type="ChEBI" id="CHEBI:18420"/>
    </ligand>
</feature>
<feature type="binding site" description="in other chain" evidence="1">
    <location>
        <position position="129"/>
    </location>
    <ligand>
        <name>IMP</name>
        <dbReference type="ChEBI" id="CHEBI:58053"/>
        <note>ligand shared between dimeric partners</note>
    </ligand>
</feature>
<feature type="binding site" evidence="1">
    <location>
        <position position="143"/>
    </location>
    <ligand>
        <name>IMP</name>
        <dbReference type="ChEBI" id="CHEBI:58053"/>
        <note>ligand shared between dimeric partners</note>
    </ligand>
</feature>
<feature type="binding site" description="in other chain" evidence="1">
    <location>
        <position position="223"/>
    </location>
    <ligand>
        <name>IMP</name>
        <dbReference type="ChEBI" id="CHEBI:58053"/>
        <note>ligand shared between dimeric partners</note>
    </ligand>
</feature>
<feature type="binding site" description="in other chain" evidence="1">
    <location>
        <position position="238"/>
    </location>
    <ligand>
        <name>IMP</name>
        <dbReference type="ChEBI" id="CHEBI:58053"/>
        <note>ligand shared between dimeric partners</note>
    </ligand>
</feature>
<feature type="binding site" evidence="1">
    <location>
        <begin position="298"/>
        <end position="304"/>
    </location>
    <ligand>
        <name>substrate</name>
    </ligand>
</feature>
<feature type="binding site" description="in other chain" evidence="1">
    <location>
        <position position="302"/>
    </location>
    <ligand>
        <name>IMP</name>
        <dbReference type="ChEBI" id="CHEBI:58053"/>
        <note>ligand shared between dimeric partners</note>
    </ligand>
</feature>
<feature type="binding site" evidence="1">
    <location>
        <position position="304"/>
    </location>
    <ligand>
        <name>GTP</name>
        <dbReference type="ChEBI" id="CHEBI:37565"/>
    </ligand>
</feature>
<feature type="binding site" evidence="1">
    <location>
        <begin position="330"/>
        <end position="332"/>
    </location>
    <ligand>
        <name>GTP</name>
        <dbReference type="ChEBI" id="CHEBI:37565"/>
    </ligand>
</feature>
<feature type="binding site" evidence="1">
    <location>
        <begin position="412"/>
        <end position="414"/>
    </location>
    <ligand>
        <name>GTP</name>
        <dbReference type="ChEBI" id="CHEBI:37565"/>
    </ligand>
</feature>
<organism>
    <name type="scientific">Brucella melitensis biotype 1 (strain ATCC 23456 / CCUG 17765 / NCTC 10094 / 16M)</name>
    <dbReference type="NCBI Taxonomy" id="224914"/>
    <lineage>
        <taxon>Bacteria</taxon>
        <taxon>Pseudomonadati</taxon>
        <taxon>Pseudomonadota</taxon>
        <taxon>Alphaproteobacteria</taxon>
        <taxon>Hyphomicrobiales</taxon>
        <taxon>Brucellaceae</taxon>
        <taxon>Brucella/Ochrobactrum group</taxon>
        <taxon>Brucella</taxon>
    </lineage>
</organism>
<keyword id="KW-0963">Cytoplasm</keyword>
<keyword id="KW-0342">GTP-binding</keyword>
<keyword id="KW-0436">Ligase</keyword>
<keyword id="KW-0460">Magnesium</keyword>
<keyword id="KW-0479">Metal-binding</keyword>
<keyword id="KW-0547">Nucleotide-binding</keyword>
<keyword id="KW-0658">Purine biosynthesis</keyword>
<name>PURA_BRUME</name>
<protein>
    <recommendedName>
        <fullName evidence="1">Adenylosuccinate synthetase</fullName>
        <shortName evidence="1">AMPSase</shortName>
        <shortName evidence="1">AdSS</shortName>
        <ecNumber evidence="1">6.3.4.4</ecNumber>
    </recommendedName>
    <alternativeName>
        <fullName evidence="1">IMP--aspartate ligase</fullName>
    </alternativeName>
</protein>
<sequence>MANVVVVGSQWGDEGKGKIVDWLSERADVIVRYQGGHNAGHTLVIDGVSYKLSLLPSGLVRGKLSVIGNGVVVDPHHFVAEVEKLRGQGIDVTPDVLRVAENAPLILSIHRELDAMREGSNSGLKIGTTKRGIGPAYEDKVGRRAIRVIDLTEPETLRPKVERLLAHHNSLRRGMGLEEIAVETILTELTSVADQILPYIDQVWRVLDERRKAGARILFEGAQGALLDNDHGTYPFVTSSNTVAGQAAAGSGLGPTAIGYVLGITKAYTTRVGEGPFPTELNDEIGEFLGTKGHEFGVVTGRKRRCGWFDAVIVRQTVRTSGINGIALTKLDVLDGLEEIKICVAYELDGKRIDYLPSSMGAQARVKPIYETLPGWSETTAGARSWNDLPAQAVKYVRHIEELIGAPVAMLSTSPEREDTILVTDPFHD</sequence>
<evidence type="ECO:0000255" key="1">
    <source>
        <dbReference type="HAMAP-Rule" id="MF_00011"/>
    </source>
</evidence>
<evidence type="ECO:0000305" key="2"/>
<gene>
    <name evidence="1" type="primary">purA</name>
    <name type="ordered locus">BMEI0351</name>
</gene>
<dbReference type="EC" id="6.3.4.4" evidence="1"/>
<dbReference type="EMBL" id="AE008917">
    <property type="protein sequence ID" value="AAL51532.1"/>
    <property type="status" value="ALT_INIT"/>
    <property type="molecule type" value="Genomic_DNA"/>
</dbReference>
<dbReference type="PIR" id="AI3295">
    <property type="entry name" value="AI3295"/>
</dbReference>
<dbReference type="RefSeq" id="WP_002964773.1">
    <property type="nucleotide sequence ID" value="NZ_GG703781.1"/>
</dbReference>
<dbReference type="SMR" id="P65878"/>
<dbReference type="KEGG" id="bme:BMEI0351"/>
<dbReference type="KEGG" id="bmel:DK63_1083"/>
<dbReference type="PATRIC" id="fig|224914.52.peg.1139"/>
<dbReference type="eggNOG" id="COG0104">
    <property type="taxonomic scope" value="Bacteria"/>
</dbReference>
<dbReference type="PhylomeDB" id="P65878"/>
<dbReference type="UniPathway" id="UPA00075">
    <property type="reaction ID" value="UER00335"/>
</dbReference>
<dbReference type="Proteomes" id="UP000000419">
    <property type="component" value="Chromosome I"/>
</dbReference>
<dbReference type="GO" id="GO:0005737">
    <property type="term" value="C:cytoplasm"/>
    <property type="evidence" value="ECO:0007669"/>
    <property type="project" value="UniProtKB-SubCell"/>
</dbReference>
<dbReference type="GO" id="GO:0004019">
    <property type="term" value="F:adenylosuccinate synthase activity"/>
    <property type="evidence" value="ECO:0007669"/>
    <property type="project" value="UniProtKB-UniRule"/>
</dbReference>
<dbReference type="GO" id="GO:0005525">
    <property type="term" value="F:GTP binding"/>
    <property type="evidence" value="ECO:0007669"/>
    <property type="project" value="UniProtKB-UniRule"/>
</dbReference>
<dbReference type="GO" id="GO:0000287">
    <property type="term" value="F:magnesium ion binding"/>
    <property type="evidence" value="ECO:0007669"/>
    <property type="project" value="UniProtKB-UniRule"/>
</dbReference>
<dbReference type="GO" id="GO:0044208">
    <property type="term" value="P:'de novo' AMP biosynthetic process"/>
    <property type="evidence" value="ECO:0007669"/>
    <property type="project" value="UniProtKB-UniRule"/>
</dbReference>
<dbReference type="GO" id="GO:0046040">
    <property type="term" value="P:IMP metabolic process"/>
    <property type="evidence" value="ECO:0007669"/>
    <property type="project" value="TreeGrafter"/>
</dbReference>
<dbReference type="CDD" id="cd03108">
    <property type="entry name" value="AdSS"/>
    <property type="match status" value="1"/>
</dbReference>
<dbReference type="FunFam" id="1.10.300.10:FF:000001">
    <property type="entry name" value="Adenylosuccinate synthetase"/>
    <property type="match status" value="1"/>
</dbReference>
<dbReference type="FunFam" id="3.90.170.10:FF:000001">
    <property type="entry name" value="Adenylosuccinate synthetase"/>
    <property type="match status" value="1"/>
</dbReference>
<dbReference type="Gene3D" id="3.40.440.10">
    <property type="entry name" value="Adenylosuccinate Synthetase, subunit A, domain 1"/>
    <property type="match status" value="1"/>
</dbReference>
<dbReference type="Gene3D" id="1.10.300.10">
    <property type="entry name" value="Adenylosuccinate Synthetase, subunit A, domain 2"/>
    <property type="match status" value="1"/>
</dbReference>
<dbReference type="Gene3D" id="3.90.170.10">
    <property type="entry name" value="Adenylosuccinate Synthetase, subunit A, domain 3"/>
    <property type="match status" value="1"/>
</dbReference>
<dbReference type="HAMAP" id="MF_00011">
    <property type="entry name" value="Adenylosucc_synth"/>
    <property type="match status" value="1"/>
</dbReference>
<dbReference type="InterPro" id="IPR018220">
    <property type="entry name" value="Adenylosuccin_syn_GTP-bd"/>
</dbReference>
<dbReference type="InterPro" id="IPR033128">
    <property type="entry name" value="Adenylosuccin_syn_Lys_AS"/>
</dbReference>
<dbReference type="InterPro" id="IPR042109">
    <property type="entry name" value="Adenylosuccinate_synth_dom1"/>
</dbReference>
<dbReference type="InterPro" id="IPR042110">
    <property type="entry name" value="Adenylosuccinate_synth_dom2"/>
</dbReference>
<dbReference type="InterPro" id="IPR042111">
    <property type="entry name" value="Adenylosuccinate_synth_dom3"/>
</dbReference>
<dbReference type="InterPro" id="IPR001114">
    <property type="entry name" value="Adenylosuccinate_synthetase"/>
</dbReference>
<dbReference type="InterPro" id="IPR027417">
    <property type="entry name" value="P-loop_NTPase"/>
</dbReference>
<dbReference type="NCBIfam" id="NF002223">
    <property type="entry name" value="PRK01117.1"/>
    <property type="match status" value="1"/>
</dbReference>
<dbReference type="NCBIfam" id="TIGR00184">
    <property type="entry name" value="purA"/>
    <property type="match status" value="1"/>
</dbReference>
<dbReference type="PANTHER" id="PTHR11846">
    <property type="entry name" value="ADENYLOSUCCINATE SYNTHETASE"/>
    <property type="match status" value="1"/>
</dbReference>
<dbReference type="PANTHER" id="PTHR11846:SF0">
    <property type="entry name" value="ADENYLOSUCCINATE SYNTHETASE"/>
    <property type="match status" value="1"/>
</dbReference>
<dbReference type="Pfam" id="PF00709">
    <property type="entry name" value="Adenylsucc_synt"/>
    <property type="match status" value="1"/>
</dbReference>
<dbReference type="SMART" id="SM00788">
    <property type="entry name" value="Adenylsucc_synt"/>
    <property type="match status" value="1"/>
</dbReference>
<dbReference type="SUPFAM" id="SSF52540">
    <property type="entry name" value="P-loop containing nucleoside triphosphate hydrolases"/>
    <property type="match status" value="1"/>
</dbReference>
<dbReference type="PROSITE" id="PS01266">
    <property type="entry name" value="ADENYLOSUCCIN_SYN_1"/>
    <property type="match status" value="1"/>
</dbReference>
<dbReference type="PROSITE" id="PS00513">
    <property type="entry name" value="ADENYLOSUCCIN_SYN_2"/>
    <property type="match status" value="1"/>
</dbReference>
<comment type="function">
    <text evidence="1">Plays an important role in the de novo pathway of purine nucleotide biosynthesis. Catalyzes the first committed step in the biosynthesis of AMP from IMP.</text>
</comment>
<comment type="catalytic activity">
    <reaction evidence="1">
        <text>IMP + L-aspartate + GTP = N(6)-(1,2-dicarboxyethyl)-AMP + GDP + phosphate + 2 H(+)</text>
        <dbReference type="Rhea" id="RHEA:15753"/>
        <dbReference type="ChEBI" id="CHEBI:15378"/>
        <dbReference type="ChEBI" id="CHEBI:29991"/>
        <dbReference type="ChEBI" id="CHEBI:37565"/>
        <dbReference type="ChEBI" id="CHEBI:43474"/>
        <dbReference type="ChEBI" id="CHEBI:57567"/>
        <dbReference type="ChEBI" id="CHEBI:58053"/>
        <dbReference type="ChEBI" id="CHEBI:58189"/>
        <dbReference type="EC" id="6.3.4.4"/>
    </reaction>
</comment>
<comment type="cofactor">
    <cofactor evidence="1">
        <name>Mg(2+)</name>
        <dbReference type="ChEBI" id="CHEBI:18420"/>
    </cofactor>
    <text evidence="1">Binds 1 Mg(2+) ion per subunit.</text>
</comment>
<comment type="pathway">
    <text evidence="1">Purine metabolism; AMP biosynthesis via de novo pathway; AMP from IMP: step 1/2.</text>
</comment>
<comment type="subunit">
    <text evidence="1">Homodimer.</text>
</comment>
<comment type="subcellular location">
    <subcellularLocation>
        <location evidence="1">Cytoplasm</location>
    </subcellularLocation>
</comment>
<comment type="similarity">
    <text evidence="1">Belongs to the adenylosuccinate synthetase family.</text>
</comment>
<comment type="sequence caution" evidence="2">
    <conflict type="erroneous initiation">
        <sequence resource="EMBL-CDS" id="AAL51532"/>
    </conflict>
</comment>
<accession>P65878</accession>
<accession>Q8FZ20</accession>
<accession>Q8YIU1</accession>
<proteinExistence type="inferred from homology"/>
<reference key="1">
    <citation type="journal article" date="2002" name="Proc. Natl. Acad. Sci. U.S.A.">
        <title>The genome sequence of the facultative intracellular pathogen Brucella melitensis.</title>
        <authorList>
            <person name="DelVecchio V.G."/>
            <person name="Kapatral V."/>
            <person name="Redkar R.J."/>
            <person name="Patra G."/>
            <person name="Mujer C."/>
            <person name="Los T."/>
            <person name="Ivanova N."/>
            <person name="Anderson I."/>
            <person name="Bhattacharyya A."/>
            <person name="Lykidis A."/>
            <person name="Reznik G."/>
            <person name="Jablonski L."/>
            <person name="Larsen N."/>
            <person name="D'Souza M."/>
            <person name="Bernal A."/>
            <person name="Mazur M."/>
            <person name="Goltsman E."/>
            <person name="Selkov E."/>
            <person name="Elzer P.H."/>
            <person name="Hagius S."/>
            <person name="O'Callaghan D."/>
            <person name="Letesson J.-J."/>
            <person name="Haselkorn R."/>
            <person name="Kyrpides N.C."/>
            <person name="Overbeek R."/>
        </authorList>
    </citation>
    <scope>NUCLEOTIDE SEQUENCE [LARGE SCALE GENOMIC DNA]</scope>
    <source>
        <strain>ATCC 23456 / CCUG 17765 / NCTC 10094 / 16M</strain>
    </source>
</reference>